<protein>
    <recommendedName>
        <fullName evidence="2 3">16S rRNA aminocarboxypropyltransferase</fullName>
        <ecNumber evidence="2">2.5.1.157</ecNumber>
    </recommendedName>
</protein>
<feature type="chain" id="PRO_0000094419" description="16S rRNA aminocarboxypropyltransferase">
    <location>
        <begin position="1"/>
        <end position="169"/>
    </location>
</feature>
<feature type="binding site" evidence="1 2">
    <location>
        <position position="15"/>
    </location>
    <ligand>
        <name>S-adenosyl-L-methionine</name>
        <dbReference type="ChEBI" id="CHEBI:59789"/>
    </ligand>
</feature>
<feature type="binding site" evidence="2">
    <location>
        <position position="65"/>
    </location>
    <ligand>
        <name>S-adenosyl-L-methionine</name>
        <dbReference type="ChEBI" id="CHEBI:59789"/>
    </ligand>
</feature>
<feature type="binding site" evidence="1 2">
    <location>
        <position position="88"/>
    </location>
    <ligand>
        <name>S-adenosyl-L-methionine</name>
        <dbReference type="ChEBI" id="CHEBI:59789"/>
    </ligand>
</feature>
<feature type="binding site" evidence="1 2">
    <location>
        <position position="107"/>
    </location>
    <ligand>
        <name>S-adenosyl-L-methionine</name>
        <dbReference type="ChEBI" id="CHEBI:59789"/>
    </ligand>
</feature>
<organism>
    <name type="scientific">Methanopyrus kandleri (strain AV19 / DSM 6324 / JCM 9639 / NBRC 100938)</name>
    <dbReference type="NCBI Taxonomy" id="190192"/>
    <lineage>
        <taxon>Archaea</taxon>
        <taxon>Methanobacteriati</taxon>
        <taxon>Methanobacteriota</taxon>
        <taxon>Methanomada group</taxon>
        <taxon>Methanopyri</taxon>
        <taxon>Methanopyrales</taxon>
        <taxon>Methanopyraceae</taxon>
        <taxon>Methanopyrus</taxon>
    </lineage>
</organism>
<keyword id="KW-0963">Cytoplasm</keyword>
<keyword id="KW-1185">Reference proteome</keyword>
<keyword id="KW-0690">Ribosome biogenesis</keyword>
<keyword id="KW-0698">rRNA processing</keyword>
<keyword id="KW-0949">S-adenosyl-L-methionine</keyword>
<keyword id="KW-0808">Transferase</keyword>
<dbReference type="EC" id="2.5.1.157" evidence="2"/>
<dbReference type="EMBL" id="AE009439">
    <property type="protein sequence ID" value="AAM01853.1"/>
    <property type="molecule type" value="Genomic_DNA"/>
</dbReference>
<dbReference type="SMR" id="Q8TXM4"/>
<dbReference type="FunCoup" id="Q8TXM4">
    <property type="interactions" value="77"/>
</dbReference>
<dbReference type="STRING" id="190192.MK0638"/>
<dbReference type="PaxDb" id="190192-MK0638"/>
<dbReference type="EnsemblBacteria" id="AAM01853">
    <property type="protein sequence ID" value="AAM01853"/>
    <property type="gene ID" value="MK0638"/>
</dbReference>
<dbReference type="KEGG" id="mka:MK0638"/>
<dbReference type="PATRIC" id="fig|190192.8.peg.678"/>
<dbReference type="HOGENOM" id="CLU_035060_4_2_2"/>
<dbReference type="InParanoid" id="Q8TXM4"/>
<dbReference type="OrthoDB" id="7441at2157"/>
<dbReference type="Proteomes" id="UP000001826">
    <property type="component" value="Chromosome"/>
</dbReference>
<dbReference type="GO" id="GO:0005737">
    <property type="term" value="C:cytoplasm"/>
    <property type="evidence" value="ECO:0007669"/>
    <property type="project" value="UniProtKB-SubCell"/>
</dbReference>
<dbReference type="GO" id="GO:0106388">
    <property type="term" value="F:18S rRNA aminocarboxypropyltransferase activity"/>
    <property type="evidence" value="ECO:0007669"/>
    <property type="project" value="InterPro"/>
</dbReference>
<dbReference type="GO" id="GO:1904047">
    <property type="term" value="F:S-adenosyl-L-methionine binding"/>
    <property type="evidence" value="ECO:0007669"/>
    <property type="project" value="UniProtKB-UniRule"/>
</dbReference>
<dbReference type="GO" id="GO:0000455">
    <property type="term" value="P:enzyme-directed rRNA pseudouridine synthesis"/>
    <property type="evidence" value="ECO:0007669"/>
    <property type="project" value="UniProtKB-UniRule"/>
</dbReference>
<dbReference type="HAMAP" id="MF_01116">
    <property type="entry name" value="TSR3"/>
    <property type="match status" value="1"/>
</dbReference>
<dbReference type="InterPro" id="IPR022968">
    <property type="entry name" value="Tsr3-like"/>
</dbReference>
<dbReference type="InterPro" id="IPR007177">
    <property type="entry name" value="Tsr3_C"/>
</dbReference>
<dbReference type="NCBIfam" id="NF002621">
    <property type="entry name" value="PRK02287.1"/>
    <property type="match status" value="1"/>
</dbReference>
<dbReference type="PANTHER" id="PTHR20426:SF0">
    <property type="entry name" value="18S RRNA AMINOCARBOXYPROPYLTRANSFERASE"/>
    <property type="match status" value="1"/>
</dbReference>
<dbReference type="PANTHER" id="PTHR20426">
    <property type="entry name" value="RIBOSOME BIOGENESIS PROTEIN TSR3 HOMOLOG"/>
    <property type="match status" value="1"/>
</dbReference>
<dbReference type="Pfam" id="PF04034">
    <property type="entry name" value="Ribo_biogen_C"/>
    <property type="match status" value="1"/>
</dbReference>
<gene>
    <name type="ordered locus">MK0638</name>
</gene>
<proteinExistence type="inferred from homology"/>
<reference key="1">
    <citation type="journal article" date="2002" name="Proc. Natl. Acad. Sci. U.S.A.">
        <title>The complete genome of hyperthermophile Methanopyrus kandleri AV19 and monophyly of archaeal methanogens.</title>
        <authorList>
            <person name="Slesarev A.I."/>
            <person name="Mezhevaya K.V."/>
            <person name="Makarova K.S."/>
            <person name="Polushin N.N."/>
            <person name="Shcherbinina O.V."/>
            <person name="Shakhova V.V."/>
            <person name="Belova G.I."/>
            <person name="Aravind L."/>
            <person name="Natale D.A."/>
            <person name="Rogozin I.B."/>
            <person name="Tatusov R.L."/>
            <person name="Wolf Y.I."/>
            <person name="Stetter K.O."/>
            <person name="Malykh A.G."/>
            <person name="Koonin E.V."/>
            <person name="Kozyavkin S.A."/>
        </authorList>
    </citation>
    <scope>NUCLEOTIDE SEQUENCE [LARGE SCALE GENOMIC DNA]</scope>
    <source>
        <strain>AV19 / DSM 6324 / JCM 9639 / NBRC 100938</strain>
    </source>
</reference>
<name>TSR3_METKA</name>
<sequence length="169" mass="19233">MIVLHARDCDPKACTALRAHRMGLVELTRHPGDVPTGAVVLDPTVEKALSREDRDAALERGLVAVDCSWEHVHRYFGPLRRRCRHRILPYLIAANPVNYGKPCKLSTVEALAAALYILGFRREAEEFISRFKWGPAFLELNRERLEAYRRAETSAEVVRVQEEFLPDGL</sequence>
<evidence type="ECO:0000250" key="1">
    <source>
        <dbReference type="UniProtKB" id="E1QU22"/>
    </source>
</evidence>
<evidence type="ECO:0000255" key="2">
    <source>
        <dbReference type="HAMAP-Rule" id="MF_01116"/>
    </source>
</evidence>
<evidence type="ECO:0000305" key="3"/>
<accession>Q8TXM4</accession>
<comment type="function">
    <text evidence="2">Aminocarboxypropyltransferase that catalyzes the aminocarboxypropyl transfer on pseudouridine corresponding to position 914 in M.jannaschii 16S rRNA. It constitutes the last step in biosynthesis of the hypermodified N1-methyl-N3-(3-amino-3-carboxypropyl) pseudouridine (m1acp3-Psi).</text>
</comment>
<comment type="catalytic activity">
    <reaction evidence="2">
        <text>an N(1)-methylpseudouridine in rRNA + S-adenosyl-L-methionine = N(1)-methyl-N(3)-[(3S)-3-amino-3-carboxypropyl]pseudouridine in rRNA + S-methyl-5'-thioadenosine + H(+)</text>
        <dbReference type="Rhea" id="RHEA:63296"/>
        <dbReference type="Rhea" id="RHEA-COMP:11634"/>
        <dbReference type="Rhea" id="RHEA-COMP:16310"/>
        <dbReference type="ChEBI" id="CHEBI:15378"/>
        <dbReference type="ChEBI" id="CHEBI:17509"/>
        <dbReference type="ChEBI" id="CHEBI:59789"/>
        <dbReference type="ChEBI" id="CHEBI:74890"/>
        <dbReference type="ChEBI" id="CHEBI:146234"/>
        <dbReference type="EC" id="2.5.1.157"/>
    </reaction>
</comment>
<comment type="subcellular location">
    <subcellularLocation>
        <location evidence="2">Cytoplasm</location>
    </subcellularLocation>
</comment>
<comment type="similarity">
    <text evidence="2">Belongs to the TDD superfamily. TSR3 family.</text>
</comment>